<reference key="1">
    <citation type="journal article" date="2006" name="Proc. Natl. Acad. Sci. U.S.A.">
        <title>The complete genome of Rhodococcus sp. RHA1 provides insights into a catabolic powerhouse.</title>
        <authorList>
            <person name="McLeod M.P."/>
            <person name="Warren R.L."/>
            <person name="Hsiao W.W.L."/>
            <person name="Araki N."/>
            <person name="Myhre M."/>
            <person name="Fernandes C."/>
            <person name="Miyazawa D."/>
            <person name="Wong W."/>
            <person name="Lillquist A.L."/>
            <person name="Wang D."/>
            <person name="Dosanjh M."/>
            <person name="Hara H."/>
            <person name="Petrescu A."/>
            <person name="Morin R.D."/>
            <person name="Yang G."/>
            <person name="Stott J.M."/>
            <person name="Schein J.E."/>
            <person name="Shin H."/>
            <person name="Smailus D."/>
            <person name="Siddiqui A.S."/>
            <person name="Marra M.A."/>
            <person name="Jones S.J.M."/>
            <person name="Holt R."/>
            <person name="Brinkman F.S.L."/>
            <person name="Miyauchi K."/>
            <person name="Fukuda M."/>
            <person name="Davies J.E."/>
            <person name="Mohn W.W."/>
            <person name="Eltis L.D."/>
        </authorList>
    </citation>
    <scope>NUCLEOTIDE SEQUENCE [LARGE SCALE GENOMIC DNA]</scope>
    <source>
        <strain>RHA1</strain>
    </source>
</reference>
<sequence>MRQILFAAGIALAVSILLTPVLIKAFSRQGFGQEIRVEGPASHQSKRGTPTMGGVAILAGLWAGYWGSHLIGIGYNADGPSASGLLVLGLTTALGGVGFLDDFIKIRKQRNLGLNKTAKLVGQLIAAVAFGILALQFRGANDLTPGSEHLSYVRDIATVTMGSVVFVAFCYLLVSAWSNAVNLTDGLDGLAAGSMSLVLGAYVIITFWQYRNACETSPGKGCYDVRDPLDLALICAAGAGACIGFLWWNAAPAKIFMGDTGSLALGGMLAGLSITTRTELLMVVIGALFVAEAASVVIQVAVFRSSRRRVFRMAPFHHHFELAGWAETTVIIRFWLLAAIASAIGLALFYSEYLAAIGG</sequence>
<name>MRAY_RHOJR</name>
<gene>
    <name evidence="1" type="primary">mraY</name>
    <name type="ordered locus">RHA1_ro01091</name>
</gene>
<organism>
    <name type="scientific">Rhodococcus jostii (strain RHA1)</name>
    <dbReference type="NCBI Taxonomy" id="101510"/>
    <lineage>
        <taxon>Bacteria</taxon>
        <taxon>Bacillati</taxon>
        <taxon>Actinomycetota</taxon>
        <taxon>Actinomycetes</taxon>
        <taxon>Mycobacteriales</taxon>
        <taxon>Nocardiaceae</taxon>
        <taxon>Rhodococcus</taxon>
    </lineage>
</organism>
<protein>
    <recommendedName>
        <fullName evidence="1">Phospho-N-acetylmuramoyl-pentapeptide-transferase</fullName>
        <ecNumber evidence="1">2.7.8.13</ecNumber>
    </recommendedName>
    <alternativeName>
        <fullName evidence="1">UDP-MurNAc-pentapeptide phosphotransferase</fullName>
    </alternativeName>
</protein>
<accession>Q0SHR8</accession>
<proteinExistence type="inferred from homology"/>
<keyword id="KW-0131">Cell cycle</keyword>
<keyword id="KW-0132">Cell division</keyword>
<keyword id="KW-1003">Cell membrane</keyword>
<keyword id="KW-0133">Cell shape</keyword>
<keyword id="KW-0961">Cell wall biogenesis/degradation</keyword>
<keyword id="KW-0460">Magnesium</keyword>
<keyword id="KW-0472">Membrane</keyword>
<keyword id="KW-0479">Metal-binding</keyword>
<keyword id="KW-0573">Peptidoglycan synthesis</keyword>
<keyword id="KW-0808">Transferase</keyword>
<keyword id="KW-0812">Transmembrane</keyword>
<keyword id="KW-1133">Transmembrane helix</keyword>
<comment type="function">
    <text evidence="1">Catalyzes the initial step of the lipid cycle reactions in the biosynthesis of the cell wall peptidoglycan: transfers peptidoglycan precursor phospho-MurNAc-pentapeptide from UDP-MurNAc-pentapeptide onto the lipid carrier undecaprenyl phosphate, yielding undecaprenyl-pyrophosphoryl-MurNAc-pentapeptide, known as lipid I.</text>
</comment>
<comment type="catalytic activity">
    <reaction evidence="1">
        <text>UDP-N-acetyl-alpha-D-muramoyl-L-alanyl-gamma-D-glutamyl-meso-2,6-diaminopimeloyl-D-alanyl-D-alanine + di-trans,octa-cis-undecaprenyl phosphate = di-trans,octa-cis-undecaprenyl diphospho-N-acetyl-alpha-D-muramoyl-L-alanyl-D-glutamyl-meso-2,6-diaminopimeloyl-D-alanyl-D-alanine + UMP</text>
        <dbReference type="Rhea" id="RHEA:28386"/>
        <dbReference type="ChEBI" id="CHEBI:57865"/>
        <dbReference type="ChEBI" id="CHEBI:60392"/>
        <dbReference type="ChEBI" id="CHEBI:61386"/>
        <dbReference type="ChEBI" id="CHEBI:61387"/>
        <dbReference type="EC" id="2.7.8.13"/>
    </reaction>
</comment>
<comment type="cofactor">
    <cofactor evidence="1">
        <name>Mg(2+)</name>
        <dbReference type="ChEBI" id="CHEBI:18420"/>
    </cofactor>
</comment>
<comment type="pathway">
    <text evidence="1">Cell wall biogenesis; peptidoglycan biosynthesis.</text>
</comment>
<comment type="subcellular location">
    <subcellularLocation>
        <location evidence="1">Cell membrane</location>
        <topology evidence="1">Multi-pass membrane protein</topology>
    </subcellularLocation>
</comment>
<comment type="similarity">
    <text evidence="1">Belongs to the glycosyltransferase 4 family. MraY subfamily.</text>
</comment>
<feature type="chain" id="PRO_1000003046" description="Phospho-N-acetylmuramoyl-pentapeptide-transferase">
    <location>
        <begin position="1"/>
        <end position="359"/>
    </location>
</feature>
<feature type="transmembrane region" description="Helical" evidence="1">
    <location>
        <begin position="3"/>
        <end position="23"/>
    </location>
</feature>
<feature type="transmembrane region" description="Helical" evidence="1">
    <location>
        <begin position="53"/>
        <end position="73"/>
    </location>
</feature>
<feature type="transmembrane region" description="Helical" evidence="1">
    <location>
        <begin position="84"/>
        <end position="104"/>
    </location>
</feature>
<feature type="transmembrane region" description="Helical" evidence="1">
    <location>
        <begin position="117"/>
        <end position="137"/>
    </location>
</feature>
<feature type="transmembrane region" description="Helical" evidence="1">
    <location>
        <begin position="156"/>
        <end position="176"/>
    </location>
</feature>
<feature type="transmembrane region" description="Helical" evidence="1">
    <location>
        <begin position="187"/>
        <end position="207"/>
    </location>
</feature>
<feature type="transmembrane region" description="Helical" evidence="1">
    <location>
        <begin position="231"/>
        <end position="251"/>
    </location>
</feature>
<feature type="transmembrane region" description="Helical" evidence="1">
    <location>
        <begin position="255"/>
        <end position="275"/>
    </location>
</feature>
<feature type="transmembrane region" description="Helical" evidence="1">
    <location>
        <begin position="283"/>
        <end position="303"/>
    </location>
</feature>
<feature type="transmembrane region" description="Helical" evidence="1">
    <location>
        <begin position="330"/>
        <end position="350"/>
    </location>
</feature>
<evidence type="ECO:0000255" key="1">
    <source>
        <dbReference type="HAMAP-Rule" id="MF_00038"/>
    </source>
</evidence>
<dbReference type="EC" id="2.7.8.13" evidence="1"/>
<dbReference type="EMBL" id="CP000431">
    <property type="protein sequence ID" value="ABG92918.1"/>
    <property type="molecule type" value="Genomic_DNA"/>
</dbReference>
<dbReference type="RefSeq" id="WP_005247625.1">
    <property type="nucleotide sequence ID" value="NC_008268.1"/>
</dbReference>
<dbReference type="SMR" id="Q0SHR8"/>
<dbReference type="GeneID" id="69892751"/>
<dbReference type="KEGG" id="rha:RHA1_ro01091"/>
<dbReference type="eggNOG" id="COG0472">
    <property type="taxonomic scope" value="Bacteria"/>
</dbReference>
<dbReference type="HOGENOM" id="CLU_023982_0_1_11"/>
<dbReference type="OrthoDB" id="9805475at2"/>
<dbReference type="UniPathway" id="UPA00219"/>
<dbReference type="Proteomes" id="UP000008710">
    <property type="component" value="Chromosome"/>
</dbReference>
<dbReference type="GO" id="GO:0005886">
    <property type="term" value="C:plasma membrane"/>
    <property type="evidence" value="ECO:0007669"/>
    <property type="project" value="UniProtKB-SubCell"/>
</dbReference>
<dbReference type="GO" id="GO:0046872">
    <property type="term" value="F:metal ion binding"/>
    <property type="evidence" value="ECO:0007669"/>
    <property type="project" value="UniProtKB-KW"/>
</dbReference>
<dbReference type="GO" id="GO:0008963">
    <property type="term" value="F:phospho-N-acetylmuramoyl-pentapeptide-transferase activity"/>
    <property type="evidence" value="ECO:0007669"/>
    <property type="project" value="UniProtKB-UniRule"/>
</dbReference>
<dbReference type="GO" id="GO:0051992">
    <property type="term" value="F:UDP-N-acetylmuramoyl-L-alanyl-D-glutamyl-meso-2,6-diaminopimelyl-D-alanyl-D-alanine:undecaprenyl-phosphate transferase activity"/>
    <property type="evidence" value="ECO:0007669"/>
    <property type="project" value="RHEA"/>
</dbReference>
<dbReference type="GO" id="GO:0051301">
    <property type="term" value="P:cell division"/>
    <property type="evidence" value="ECO:0007669"/>
    <property type="project" value="UniProtKB-KW"/>
</dbReference>
<dbReference type="GO" id="GO:0071555">
    <property type="term" value="P:cell wall organization"/>
    <property type="evidence" value="ECO:0007669"/>
    <property type="project" value="UniProtKB-KW"/>
</dbReference>
<dbReference type="GO" id="GO:0009252">
    <property type="term" value="P:peptidoglycan biosynthetic process"/>
    <property type="evidence" value="ECO:0007669"/>
    <property type="project" value="UniProtKB-UniRule"/>
</dbReference>
<dbReference type="GO" id="GO:0008360">
    <property type="term" value="P:regulation of cell shape"/>
    <property type="evidence" value="ECO:0007669"/>
    <property type="project" value="UniProtKB-KW"/>
</dbReference>
<dbReference type="CDD" id="cd06852">
    <property type="entry name" value="GT_MraY"/>
    <property type="match status" value="1"/>
</dbReference>
<dbReference type="HAMAP" id="MF_00038">
    <property type="entry name" value="MraY"/>
    <property type="match status" value="1"/>
</dbReference>
<dbReference type="InterPro" id="IPR000715">
    <property type="entry name" value="Glycosyl_transferase_4"/>
</dbReference>
<dbReference type="InterPro" id="IPR003524">
    <property type="entry name" value="PNAcMuramoyl-5peptid_Trfase"/>
</dbReference>
<dbReference type="InterPro" id="IPR018480">
    <property type="entry name" value="PNAcMuramoyl-5peptid_Trfase_CS"/>
</dbReference>
<dbReference type="NCBIfam" id="TIGR00445">
    <property type="entry name" value="mraY"/>
    <property type="match status" value="1"/>
</dbReference>
<dbReference type="PANTHER" id="PTHR22926">
    <property type="entry name" value="PHOSPHO-N-ACETYLMURAMOYL-PENTAPEPTIDE-TRANSFERASE"/>
    <property type="match status" value="1"/>
</dbReference>
<dbReference type="PANTHER" id="PTHR22926:SF5">
    <property type="entry name" value="PHOSPHO-N-ACETYLMURAMOYL-PENTAPEPTIDE-TRANSFERASE HOMOLOG"/>
    <property type="match status" value="1"/>
</dbReference>
<dbReference type="Pfam" id="PF00953">
    <property type="entry name" value="Glycos_transf_4"/>
    <property type="match status" value="1"/>
</dbReference>
<dbReference type="Pfam" id="PF10555">
    <property type="entry name" value="MraY_sig1"/>
    <property type="match status" value="1"/>
</dbReference>
<dbReference type="PROSITE" id="PS01347">
    <property type="entry name" value="MRAY_1"/>
    <property type="match status" value="1"/>
</dbReference>
<dbReference type="PROSITE" id="PS01348">
    <property type="entry name" value="MRAY_2"/>
    <property type="match status" value="1"/>
</dbReference>